<proteinExistence type="inferred from homology"/>
<name>SYDND_BACCR</name>
<comment type="function">
    <text evidence="1">Aspartyl-tRNA synthetase with relaxed tRNA specificity since it is able to aspartylate not only its cognate tRNA(Asp) but also tRNA(Asn). Reaction proceeds in two steps: L-aspartate is first activated by ATP to form Asp-AMP and then transferred to the acceptor end of tRNA(Asp/Asn).</text>
</comment>
<comment type="catalytic activity">
    <reaction evidence="1">
        <text>tRNA(Asx) + L-aspartate + ATP = L-aspartyl-tRNA(Asx) + AMP + diphosphate</text>
        <dbReference type="Rhea" id="RHEA:18349"/>
        <dbReference type="Rhea" id="RHEA-COMP:9710"/>
        <dbReference type="Rhea" id="RHEA-COMP:9711"/>
        <dbReference type="ChEBI" id="CHEBI:29991"/>
        <dbReference type="ChEBI" id="CHEBI:30616"/>
        <dbReference type="ChEBI" id="CHEBI:33019"/>
        <dbReference type="ChEBI" id="CHEBI:78442"/>
        <dbReference type="ChEBI" id="CHEBI:78516"/>
        <dbReference type="ChEBI" id="CHEBI:456215"/>
        <dbReference type="EC" id="6.1.1.23"/>
    </reaction>
</comment>
<comment type="subunit">
    <text evidence="1">Homodimer.</text>
</comment>
<comment type="subcellular location">
    <subcellularLocation>
        <location evidence="1">Cytoplasm</location>
    </subcellularLocation>
</comment>
<comment type="similarity">
    <text evidence="1">Belongs to the class-II aminoacyl-tRNA synthetase family. Type 1 subfamily.</text>
</comment>
<keyword id="KW-0030">Aminoacyl-tRNA synthetase</keyword>
<keyword id="KW-0067">ATP-binding</keyword>
<keyword id="KW-0963">Cytoplasm</keyword>
<keyword id="KW-0436">Ligase</keyword>
<keyword id="KW-0547">Nucleotide-binding</keyword>
<keyword id="KW-0648">Protein biosynthesis</keyword>
<keyword id="KW-1185">Reference proteome</keyword>
<reference key="1">
    <citation type="journal article" date="2003" name="Nature">
        <title>Genome sequence of Bacillus cereus and comparative analysis with Bacillus anthracis.</title>
        <authorList>
            <person name="Ivanova N."/>
            <person name="Sorokin A."/>
            <person name="Anderson I."/>
            <person name="Galleron N."/>
            <person name="Candelon B."/>
            <person name="Kapatral V."/>
            <person name="Bhattacharyya A."/>
            <person name="Reznik G."/>
            <person name="Mikhailova N."/>
            <person name="Lapidus A."/>
            <person name="Chu L."/>
            <person name="Mazur M."/>
            <person name="Goltsman E."/>
            <person name="Larsen N."/>
            <person name="D'Souza M."/>
            <person name="Walunas T."/>
            <person name="Grechkin Y."/>
            <person name="Pusch G."/>
            <person name="Haselkorn R."/>
            <person name="Fonstein M."/>
            <person name="Ehrlich S.D."/>
            <person name="Overbeek R."/>
            <person name="Kyrpides N.C."/>
        </authorList>
    </citation>
    <scope>NUCLEOTIDE SEQUENCE [LARGE SCALE GENOMIC DNA]</scope>
    <source>
        <strain>ATCC 14579 / DSM 31 / CCUG 7414 / JCM 2152 / NBRC 15305 / NCIMB 9373 / NCTC 2599 / NRRL B-3711</strain>
    </source>
</reference>
<accession>Q817X8</accession>
<organism>
    <name type="scientific">Bacillus cereus (strain ATCC 14579 / DSM 31 / CCUG 7414 / JCM 2152 / NBRC 15305 / NCIMB 9373 / NCTC 2599 / NRRL B-3711)</name>
    <dbReference type="NCBI Taxonomy" id="226900"/>
    <lineage>
        <taxon>Bacteria</taxon>
        <taxon>Bacillati</taxon>
        <taxon>Bacillota</taxon>
        <taxon>Bacilli</taxon>
        <taxon>Bacillales</taxon>
        <taxon>Bacillaceae</taxon>
        <taxon>Bacillus</taxon>
        <taxon>Bacillus cereus group</taxon>
    </lineage>
</organism>
<gene>
    <name evidence="1" type="primary">aspS</name>
    <name type="ordered locus">BC_4397</name>
</gene>
<feature type="chain" id="PRO_0000110822" description="Aspartate--tRNA(Asp/Asn) ligase">
    <location>
        <begin position="1"/>
        <end position="591"/>
    </location>
</feature>
<feature type="region of interest" description="Aspartate" evidence="1">
    <location>
        <begin position="200"/>
        <end position="203"/>
    </location>
</feature>
<feature type="binding site" evidence="1">
    <location>
        <position position="176"/>
    </location>
    <ligand>
        <name>L-aspartate</name>
        <dbReference type="ChEBI" id="CHEBI:29991"/>
    </ligand>
</feature>
<feature type="binding site" evidence="1">
    <location>
        <begin position="222"/>
        <end position="224"/>
    </location>
    <ligand>
        <name>ATP</name>
        <dbReference type="ChEBI" id="CHEBI:30616"/>
    </ligand>
</feature>
<feature type="binding site" evidence="1">
    <location>
        <position position="222"/>
    </location>
    <ligand>
        <name>L-aspartate</name>
        <dbReference type="ChEBI" id="CHEBI:29991"/>
    </ligand>
</feature>
<feature type="binding site" evidence="1">
    <location>
        <position position="231"/>
    </location>
    <ligand>
        <name>ATP</name>
        <dbReference type="ChEBI" id="CHEBI:30616"/>
    </ligand>
</feature>
<feature type="binding site" evidence="1">
    <location>
        <position position="450"/>
    </location>
    <ligand>
        <name>L-aspartate</name>
        <dbReference type="ChEBI" id="CHEBI:29991"/>
    </ligand>
</feature>
<feature type="binding site" evidence="1">
    <location>
        <position position="484"/>
    </location>
    <ligand>
        <name>ATP</name>
        <dbReference type="ChEBI" id="CHEBI:30616"/>
    </ligand>
</feature>
<feature type="binding site" evidence="1">
    <location>
        <position position="491"/>
    </location>
    <ligand>
        <name>L-aspartate</name>
        <dbReference type="ChEBI" id="CHEBI:29991"/>
    </ligand>
</feature>
<feature type="binding site" evidence="1">
    <location>
        <begin position="536"/>
        <end position="539"/>
    </location>
    <ligand>
        <name>ATP</name>
        <dbReference type="ChEBI" id="CHEBI:30616"/>
    </ligand>
</feature>
<feature type="site" description="Important for tRNA non-discrimination" evidence="1">
    <location>
        <position position="84"/>
    </location>
</feature>
<sequence length="591" mass="66313">MAERTHACGKVTVEAVGQTVQLKGWVQKRRDLGGLIFIDLRDRTGIVQVVFNPETSKEALEVAETIRSEYVLHVEGTVVERGEGAINDNMATGRIEVQATKVNVLNAAKTTPIIIADDTDASEDVRLKYRYLDLRRPVMFNTFKMRHDVTKTIRNFLDTEEFLEVETPILTKSTPEGARDYLVPSRVHDGEFYALPQSPQLFKQLLMVGGFERYYQVARCFRDEDLRADRQPEFTQIDIEASFLTQDEILDMMERMMTKVMKDAKGVEVSAPFPRMKYADAMARYGSDKPDTCFEMELTDLSEFAADCGFKVFTSAVESGGQVKAINAKGAASKYSRKDIDALTEFVKVYGAKGLAWLKVEEDGLKGPIAKFFGEEDANVLMSTLEATAGDLLLFVADKKSVVADSLGALRLRLGKELELIDESKFNFLWVTDWPLLEYDEDADRYFAAHHPFTMPFREDVELLETAPEKARAQAYDLVLNGYELGGGSLRIYERDVQEKMFKALGFSQEEAQEQFGFLLEAFEYGTPPHGGIALGLDRLVMLLAGRTNLRDTIAFPKTASASCLLTEAPSPVAEAQLEELNLKLSLKEEK</sequence>
<dbReference type="EC" id="6.1.1.23" evidence="1"/>
<dbReference type="EMBL" id="AE016877">
    <property type="protein sequence ID" value="AAP11310.1"/>
    <property type="molecule type" value="Genomic_DNA"/>
</dbReference>
<dbReference type="RefSeq" id="NP_834109.1">
    <property type="nucleotide sequence ID" value="NC_004722.1"/>
</dbReference>
<dbReference type="RefSeq" id="WP_000840888.1">
    <property type="nucleotide sequence ID" value="NC_004722.1"/>
</dbReference>
<dbReference type="SMR" id="Q817X8"/>
<dbReference type="STRING" id="226900.BC_4397"/>
<dbReference type="KEGG" id="bce:BC4397"/>
<dbReference type="PATRIC" id="fig|226900.8.peg.4548"/>
<dbReference type="HOGENOM" id="CLU_014330_3_2_9"/>
<dbReference type="Proteomes" id="UP000001417">
    <property type="component" value="Chromosome"/>
</dbReference>
<dbReference type="GO" id="GO:0005737">
    <property type="term" value="C:cytoplasm"/>
    <property type="evidence" value="ECO:0007669"/>
    <property type="project" value="UniProtKB-SubCell"/>
</dbReference>
<dbReference type="GO" id="GO:0004815">
    <property type="term" value="F:aspartate-tRNA ligase activity"/>
    <property type="evidence" value="ECO:0000318"/>
    <property type="project" value="GO_Central"/>
</dbReference>
<dbReference type="GO" id="GO:0050560">
    <property type="term" value="F:aspartate-tRNA(Asn) ligase activity"/>
    <property type="evidence" value="ECO:0007669"/>
    <property type="project" value="UniProtKB-EC"/>
</dbReference>
<dbReference type="GO" id="GO:0005524">
    <property type="term" value="F:ATP binding"/>
    <property type="evidence" value="ECO:0007669"/>
    <property type="project" value="UniProtKB-UniRule"/>
</dbReference>
<dbReference type="GO" id="GO:0140096">
    <property type="term" value="F:catalytic activity, acting on a protein"/>
    <property type="evidence" value="ECO:0007669"/>
    <property type="project" value="UniProtKB-ARBA"/>
</dbReference>
<dbReference type="GO" id="GO:0003676">
    <property type="term" value="F:nucleic acid binding"/>
    <property type="evidence" value="ECO:0007669"/>
    <property type="project" value="InterPro"/>
</dbReference>
<dbReference type="GO" id="GO:0016740">
    <property type="term" value="F:transferase activity"/>
    <property type="evidence" value="ECO:0007669"/>
    <property type="project" value="UniProtKB-ARBA"/>
</dbReference>
<dbReference type="GO" id="GO:0006422">
    <property type="term" value="P:aspartyl-tRNA aminoacylation"/>
    <property type="evidence" value="ECO:0000318"/>
    <property type="project" value="GO_Central"/>
</dbReference>
<dbReference type="CDD" id="cd00777">
    <property type="entry name" value="AspRS_core"/>
    <property type="match status" value="1"/>
</dbReference>
<dbReference type="CDD" id="cd04317">
    <property type="entry name" value="EcAspRS_like_N"/>
    <property type="match status" value="1"/>
</dbReference>
<dbReference type="Gene3D" id="3.30.930.10">
    <property type="entry name" value="Bira Bifunctional Protein, Domain 2"/>
    <property type="match status" value="1"/>
</dbReference>
<dbReference type="Gene3D" id="3.30.1360.30">
    <property type="entry name" value="GAD-like domain"/>
    <property type="match status" value="1"/>
</dbReference>
<dbReference type="Gene3D" id="2.40.50.140">
    <property type="entry name" value="Nucleic acid-binding proteins"/>
    <property type="match status" value="1"/>
</dbReference>
<dbReference type="HAMAP" id="MF_00044">
    <property type="entry name" value="Asp_tRNA_synth_type1"/>
    <property type="match status" value="1"/>
</dbReference>
<dbReference type="InterPro" id="IPR004364">
    <property type="entry name" value="Aa-tRNA-synt_II"/>
</dbReference>
<dbReference type="InterPro" id="IPR006195">
    <property type="entry name" value="aa-tRNA-synth_II"/>
</dbReference>
<dbReference type="InterPro" id="IPR045864">
    <property type="entry name" value="aa-tRNA-synth_II/BPL/LPL"/>
</dbReference>
<dbReference type="InterPro" id="IPR004524">
    <property type="entry name" value="Asp-tRNA-ligase_1"/>
</dbReference>
<dbReference type="InterPro" id="IPR047089">
    <property type="entry name" value="Asp-tRNA-ligase_1_N"/>
</dbReference>
<dbReference type="InterPro" id="IPR002312">
    <property type="entry name" value="Asp/Asn-tRNA-synth_IIb"/>
</dbReference>
<dbReference type="InterPro" id="IPR047090">
    <property type="entry name" value="AspRS_core"/>
</dbReference>
<dbReference type="InterPro" id="IPR004115">
    <property type="entry name" value="GAD-like_sf"/>
</dbReference>
<dbReference type="InterPro" id="IPR029351">
    <property type="entry name" value="GAD_dom"/>
</dbReference>
<dbReference type="InterPro" id="IPR012340">
    <property type="entry name" value="NA-bd_OB-fold"/>
</dbReference>
<dbReference type="InterPro" id="IPR004365">
    <property type="entry name" value="NA-bd_OB_tRNA"/>
</dbReference>
<dbReference type="NCBIfam" id="TIGR00459">
    <property type="entry name" value="aspS_bact"/>
    <property type="match status" value="1"/>
</dbReference>
<dbReference type="NCBIfam" id="NF001750">
    <property type="entry name" value="PRK00476.1"/>
    <property type="match status" value="1"/>
</dbReference>
<dbReference type="PANTHER" id="PTHR22594:SF5">
    <property type="entry name" value="ASPARTATE--TRNA LIGASE, MITOCHONDRIAL"/>
    <property type="match status" value="1"/>
</dbReference>
<dbReference type="PANTHER" id="PTHR22594">
    <property type="entry name" value="ASPARTYL/LYSYL-TRNA SYNTHETASE"/>
    <property type="match status" value="1"/>
</dbReference>
<dbReference type="Pfam" id="PF02938">
    <property type="entry name" value="GAD"/>
    <property type="match status" value="1"/>
</dbReference>
<dbReference type="Pfam" id="PF00152">
    <property type="entry name" value="tRNA-synt_2"/>
    <property type="match status" value="1"/>
</dbReference>
<dbReference type="Pfam" id="PF01336">
    <property type="entry name" value="tRNA_anti-codon"/>
    <property type="match status" value="1"/>
</dbReference>
<dbReference type="PRINTS" id="PR01042">
    <property type="entry name" value="TRNASYNTHASP"/>
</dbReference>
<dbReference type="SUPFAM" id="SSF55681">
    <property type="entry name" value="Class II aaRS and biotin synthetases"/>
    <property type="match status" value="1"/>
</dbReference>
<dbReference type="SUPFAM" id="SSF55261">
    <property type="entry name" value="GAD domain-like"/>
    <property type="match status" value="1"/>
</dbReference>
<dbReference type="SUPFAM" id="SSF50249">
    <property type="entry name" value="Nucleic acid-binding proteins"/>
    <property type="match status" value="1"/>
</dbReference>
<dbReference type="PROSITE" id="PS50862">
    <property type="entry name" value="AA_TRNA_LIGASE_II"/>
    <property type="match status" value="1"/>
</dbReference>
<protein>
    <recommendedName>
        <fullName evidence="1">Aspartate--tRNA(Asp/Asn) ligase</fullName>
        <ecNumber evidence="1">6.1.1.23</ecNumber>
    </recommendedName>
    <alternativeName>
        <fullName evidence="1">Aspartyl-tRNA synthetase</fullName>
        <shortName evidence="1">AspRS</shortName>
    </alternativeName>
    <alternativeName>
        <fullName evidence="1">Non-discriminating aspartyl-tRNA synthetase</fullName>
        <shortName evidence="1">ND-AspRS</shortName>
    </alternativeName>
</protein>
<evidence type="ECO:0000255" key="1">
    <source>
        <dbReference type="HAMAP-Rule" id="MF_00044"/>
    </source>
</evidence>